<name>H2A05_CYRHA</name>
<reference key="1">
    <citation type="journal article" date="2010" name="J. Proteome Res.">
        <title>Molecular diversification of peptide toxins from the tarantula Haplopelma hainanum (Ornithoctonus hainana) venom based on transcriptomic, peptidomic, and genomic analyses.</title>
        <authorList>
            <person name="Tang X."/>
            <person name="Zhang Y."/>
            <person name="Hu W."/>
            <person name="Xu D."/>
            <person name="Tao H."/>
            <person name="Yang X."/>
            <person name="Li Y."/>
            <person name="Jiang L."/>
            <person name="Liang S."/>
        </authorList>
    </citation>
    <scope>NUCLEOTIDE SEQUENCE [LARGE SCALE MRNA]</scope>
    <scope>PROTEIN SEQUENCE OF 49-85</scope>
    <scope>IDENTIFICATION BY MASS SPECTROMETRY</scope>
    <source>
        <tissue>Venom</tissue>
        <tissue>Venom gland</tissue>
    </source>
</reference>
<reference key="2">
    <citation type="journal article" date="2010" name="Dong Wu Xue Yan Jiu">
        <title>Isolation and characterization of Hainantoxin-II, a new neurotoxic peptide from the Chinese bird spider (Haplopelma hainanum).</title>
        <authorList>
            <person name="Pan J.Y."/>
            <person name="Yu Z.Q."/>
        </authorList>
    </citation>
    <scope>PROTEIN SEQUENCE OF 49-85</scope>
    <scope>FUNCTION</scope>
    <scope>MASS SPECTROMETRY</scope>
    <scope>TOXIC DOSE</scope>
    <source>
        <tissue>Venom</tissue>
    </source>
</reference>
<organism>
    <name type="scientific">Cyriopagopus hainanus</name>
    <name type="common">Chinese bird spider</name>
    <name type="synonym">Haplopelma hainanum</name>
    <dbReference type="NCBI Taxonomy" id="209901"/>
    <lineage>
        <taxon>Eukaryota</taxon>
        <taxon>Metazoa</taxon>
        <taxon>Ecdysozoa</taxon>
        <taxon>Arthropoda</taxon>
        <taxon>Chelicerata</taxon>
        <taxon>Arachnida</taxon>
        <taxon>Araneae</taxon>
        <taxon>Mygalomorphae</taxon>
        <taxon>Theraphosidae</taxon>
        <taxon>Haplopelma</taxon>
    </lineage>
</organism>
<comment type="function">
    <text evidence="4">Neurotoxin active on both insects and mammals.</text>
</comment>
<comment type="subunit">
    <text>Monomer.</text>
</comment>
<comment type="subcellular location">
    <subcellularLocation>
        <location>Secreted</location>
    </subcellularLocation>
</comment>
<comment type="tissue specificity">
    <text>Expressed by the venom gland.</text>
</comment>
<comment type="mass spectrometry" mass="4253.38" method="MALDI" evidence="4"/>
<comment type="toxic dose">
    <text evidence="4">LD(50) is 1.41 mg/kg by intracerebroventricular injection into mice.</text>
</comment>
<comment type="toxic dose">
    <text evidence="4">PD(50) is 16 mg/kg in cockroaches.</text>
</comment>
<comment type="similarity">
    <text evidence="5">Belongs to the neurotoxin 12 (Hwtx-2) family. 02 (Hwtx-2) subfamily.</text>
</comment>
<dbReference type="EMBL" id="GU292885">
    <property type="protein sequence ID" value="ADB56701.1"/>
    <property type="molecule type" value="mRNA"/>
</dbReference>
<dbReference type="SMR" id="D2Y208"/>
<dbReference type="ArachnoServer" id="AS001783">
    <property type="toxin name" value="U4-theraphotoxin-Hhn1a"/>
</dbReference>
<dbReference type="GO" id="GO:0005576">
    <property type="term" value="C:extracellular region"/>
    <property type="evidence" value="ECO:0007669"/>
    <property type="project" value="UniProtKB-SubCell"/>
</dbReference>
<dbReference type="GO" id="GO:0035792">
    <property type="term" value="C:host cell postsynaptic membrane"/>
    <property type="evidence" value="ECO:0007669"/>
    <property type="project" value="UniProtKB-KW"/>
</dbReference>
<dbReference type="GO" id="GO:0090729">
    <property type="term" value="F:toxin activity"/>
    <property type="evidence" value="ECO:0007669"/>
    <property type="project" value="UniProtKB-KW"/>
</dbReference>
<dbReference type="InterPro" id="IPR012625">
    <property type="entry name" value="Hwtx-2-like"/>
</dbReference>
<dbReference type="Pfam" id="PF08089">
    <property type="entry name" value="Toxin_20"/>
    <property type="match status" value="1"/>
</dbReference>
<dbReference type="SUPFAM" id="SSF57059">
    <property type="entry name" value="omega toxin-like"/>
    <property type="match status" value="1"/>
</dbReference>
<dbReference type="PROSITE" id="PS60022">
    <property type="entry name" value="HWTX_2"/>
    <property type="match status" value="1"/>
</dbReference>
<protein>
    <recommendedName>
        <fullName>U4-theraphotoxin-Hhn1a</fullName>
        <shortName>U4-TRTX-Hhn1a</shortName>
    </recommendedName>
    <alternativeName>
        <fullName>Hainantoxin-II.5</fullName>
        <shortName>HNTX-II.5</shortName>
    </alternativeName>
    <alternativeName>
        <fullName>Peptide F8-20.15</fullName>
    </alternativeName>
</protein>
<proteinExistence type="evidence at protein level"/>
<feature type="signal peptide" evidence="2">
    <location>
        <begin position="1"/>
        <end position="22"/>
    </location>
</feature>
<feature type="propeptide" id="PRO_0000400727" evidence="3 4">
    <location>
        <begin position="23"/>
        <end position="48"/>
    </location>
</feature>
<feature type="peptide" id="PRO_0000400728" description="U4-theraphotoxin-Hhn1a">
    <location>
        <begin position="49"/>
        <end position="85"/>
    </location>
</feature>
<feature type="disulfide bond" evidence="1">
    <location>
        <begin position="52"/>
        <end position="66"/>
    </location>
</feature>
<feature type="disulfide bond" evidence="1">
    <location>
        <begin position="56"/>
        <end position="77"/>
    </location>
</feature>
<feature type="disulfide bond" evidence="1">
    <location>
        <begin position="71"/>
        <end position="82"/>
    </location>
</feature>
<accession>D2Y208</accession>
<sequence length="85" mass="9432">MKVTLIAILTCAAVLVLHTTAAEEFEAESQLMEVGMPDTELAAVDEERLFECSVSCEIEKEGNKDCKKKKCKGGWKCKFNMCVKV</sequence>
<evidence type="ECO:0000250" key="1"/>
<evidence type="ECO:0000255" key="2"/>
<evidence type="ECO:0000269" key="3">
    <source>
    </source>
</evidence>
<evidence type="ECO:0000269" key="4">
    <source>
    </source>
</evidence>
<evidence type="ECO:0000305" key="5"/>
<keyword id="KW-0903">Direct protein sequencing</keyword>
<keyword id="KW-1015">Disulfide bond</keyword>
<keyword id="KW-0528">Neurotoxin</keyword>
<keyword id="KW-0629">Postsynaptic neurotoxin</keyword>
<keyword id="KW-0964">Secreted</keyword>
<keyword id="KW-0732">Signal</keyword>
<keyword id="KW-0800">Toxin</keyword>